<evidence type="ECO:0000250" key="1"/>
<evidence type="ECO:0000305" key="2"/>
<reference key="1">
    <citation type="journal article" date="1997" name="Nature">
        <title>The complete genome sequence of the gastric pathogen Helicobacter pylori.</title>
        <authorList>
            <person name="Tomb J.-F."/>
            <person name="White O."/>
            <person name="Kerlavage A.R."/>
            <person name="Clayton R.A."/>
            <person name="Sutton G.G."/>
            <person name="Fleischmann R.D."/>
            <person name="Ketchum K.A."/>
            <person name="Klenk H.-P."/>
            <person name="Gill S.R."/>
            <person name="Dougherty B.A."/>
            <person name="Nelson K.E."/>
            <person name="Quackenbush J."/>
            <person name="Zhou L."/>
            <person name="Kirkness E.F."/>
            <person name="Peterson S.N."/>
            <person name="Loftus B.J."/>
            <person name="Richardson D.L."/>
            <person name="Dodson R.J."/>
            <person name="Khalak H.G."/>
            <person name="Glodek A."/>
            <person name="McKenney K."/>
            <person name="FitzGerald L.M."/>
            <person name="Lee N."/>
            <person name="Adams M.D."/>
            <person name="Hickey E.K."/>
            <person name="Berg D.E."/>
            <person name="Gocayne J.D."/>
            <person name="Utterback T.R."/>
            <person name="Peterson J.D."/>
            <person name="Kelley J.M."/>
            <person name="Cotton M.D."/>
            <person name="Weidman J.F."/>
            <person name="Fujii C."/>
            <person name="Bowman C."/>
            <person name="Watthey L."/>
            <person name="Wallin E."/>
            <person name="Hayes W.S."/>
            <person name="Borodovsky M."/>
            <person name="Karp P.D."/>
            <person name="Smith H.O."/>
            <person name="Fraser C.M."/>
            <person name="Venter J.C."/>
        </authorList>
    </citation>
    <scope>NUCLEOTIDE SEQUENCE [LARGE SCALE GENOMIC DNA]</scope>
    <source>
        <strain>ATCC 700392 / 26695</strain>
    </source>
</reference>
<proteinExistence type="inferred from homology"/>
<organism>
    <name type="scientific">Helicobacter pylori (strain ATCC 700392 / 26695)</name>
    <name type="common">Campylobacter pylori</name>
    <dbReference type="NCBI Taxonomy" id="85962"/>
    <lineage>
        <taxon>Bacteria</taxon>
        <taxon>Pseudomonadati</taxon>
        <taxon>Campylobacterota</taxon>
        <taxon>Epsilonproteobacteria</taxon>
        <taxon>Campylobacterales</taxon>
        <taxon>Helicobacteraceae</taxon>
        <taxon>Helicobacter</taxon>
    </lineage>
</organism>
<name>Y736_HELPY</name>
<keyword id="KW-0032">Aminotransferase</keyword>
<keyword id="KW-0663">Pyridoxal phosphate</keyword>
<keyword id="KW-1185">Reference proteome</keyword>
<keyword id="KW-0808">Transferase</keyword>
<dbReference type="EC" id="2.6.1.-"/>
<dbReference type="EMBL" id="AE000511">
    <property type="protein sequence ID" value="AAD07782.1"/>
    <property type="molecule type" value="Genomic_DNA"/>
</dbReference>
<dbReference type="PIR" id="H64611">
    <property type="entry name" value="H64611"/>
</dbReference>
<dbReference type="RefSeq" id="NP_207530.1">
    <property type="nucleotide sequence ID" value="NC_000915.1"/>
</dbReference>
<dbReference type="RefSeq" id="WP_000924085.1">
    <property type="nucleotide sequence ID" value="NC_018939.1"/>
</dbReference>
<dbReference type="SMR" id="O25436"/>
<dbReference type="DIP" id="DIP-3376N"/>
<dbReference type="IntAct" id="O25436">
    <property type="interactions" value="5"/>
</dbReference>
<dbReference type="MINT" id="O25436"/>
<dbReference type="STRING" id="85962.HP_0736"/>
<dbReference type="PaxDb" id="85962-C694_03780"/>
<dbReference type="EnsemblBacteria" id="AAD07782">
    <property type="protein sequence ID" value="AAD07782"/>
    <property type="gene ID" value="HP_0736"/>
</dbReference>
<dbReference type="KEGG" id="heo:C694_03780"/>
<dbReference type="KEGG" id="hpy:HP_0736"/>
<dbReference type="PATRIC" id="fig|85962.47.peg.784"/>
<dbReference type="eggNOG" id="COG0075">
    <property type="taxonomic scope" value="Bacteria"/>
</dbReference>
<dbReference type="InParanoid" id="O25436"/>
<dbReference type="OrthoDB" id="9766472at2"/>
<dbReference type="PhylomeDB" id="O25436"/>
<dbReference type="Proteomes" id="UP000000429">
    <property type="component" value="Chromosome"/>
</dbReference>
<dbReference type="GO" id="GO:0008483">
    <property type="term" value="F:transaminase activity"/>
    <property type="evidence" value="ECO:0007669"/>
    <property type="project" value="UniProtKB-KW"/>
</dbReference>
<dbReference type="Gene3D" id="3.90.1150.10">
    <property type="entry name" value="Aspartate Aminotransferase, domain 1"/>
    <property type="match status" value="1"/>
</dbReference>
<dbReference type="Gene3D" id="3.40.640.10">
    <property type="entry name" value="Type I PLP-dependent aspartate aminotransferase-like (Major domain)"/>
    <property type="match status" value="1"/>
</dbReference>
<dbReference type="InterPro" id="IPR000192">
    <property type="entry name" value="Aminotrans_V_dom"/>
</dbReference>
<dbReference type="InterPro" id="IPR015424">
    <property type="entry name" value="PyrdxlP-dep_Trfase"/>
</dbReference>
<dbReference type="InterPro" id="IPR015421">
    <property type="entry name" value="PyrdxlP-dep_Trfase_major"/>
</dbReference>
<dbReference type="InterPro" id="IPR015422">
    <property type="entry name" value="PyrdxlP-dep_Trfase_small"/>
</dbReference>
<dbReference type="InterPro" id="IPR024169">
    <property type="entry name" value="SP_NH2Trfase/AEP_transaminase"/>
</dbReference>
<dbReference type="PANTHER" id="PTHR42778">
    <property type="entry name" value="2-AMINOETHYLPHOSPHONATE--PYRUVATE TRANSAMINASE"/>
    <property type="match status" value="1"/>
</dbReference>
<dbReference type="PANTHER" id="PTHR42778:SF1">
    <property type="entry name" value="2-AMINOETHYLPHOSPHONATE--PYRUVATE TRANSAMINASE"/>
    <property type="match status" value="1"/>
</dbReference>
<dbReference type="Pfam" id="PF00266">
    <property type="entry name" value="Aminotran_5"/>
    <property type="match status" value="1"/>
</dbReference>
<dbReference type="PIRSF" id="PIRSF000524">
    <property type="entry name" value="SPT"/>
    <property type="match status" value="1"/>
</dbReference>
<dbReference type="SUPFAM" id="SSF53383">
    <property type="entry name" value="PLP-dependent transferases"/>
    <property type="match status" value="1"/>
</dbReference>
<comment type="cofactor">
    <cofactor evidence="1">
        <name>pyridoxal 5'-phosphate</name>
        <dbReference type="ChEBI" id="CHEBI:597326"/>
    </cofactor>
</comment>
<comment type="similarity">
    <text evidence="2">Belongs to the class-V pyridoxal-phosphate-dependent aminotransferase family.</text>
</comment>
<feature type="chain" id="PRO_0000150341" description="Uncharacterized aminotransferase HP_0736">
    <location>
        <begin position="1"/>
        <end position="369"/>
    </location>
</feature>
<feature type="modified residue" description="N6-(pyridoxal phosphate)lysine" evidence="1">
    <location>
        <position position="184"/>
    </location>
</feature>
<accession>O25436</accession>
<protein>
    <recommendedName>
        <fullName>Uncharacterized aminotransferase HP_0736</fullName>
        <ecNumber>2.6.1.-</ecNumber>
    </recommendedName>
</protein>
<sequence>MLLFTPGPVAINEEMRTSFSQPMPHHRTKDFEKIFQSVRENLKKMTGLEEVLLLSSSGTGAMEASVISLCQKELLFVNAGKFGERFGKIAKAHSIKAHELVYEWDTPAQVDEILSVLKANPNIDAFCIQACESSGGLRHPVEKIAQAIKETNPNVFVIVDAITALGVEPLEITHVDALIGGSQKAFMLPPAMSLVALSQNAIERIEERNVGFYFNLKSELKNQRNNTTSYTAPILHTLGLQRYFELVQNLGGFEALYRETKKAALATQKAVLALGLKIFPKSPSLSMTTIVNEHAKELRNLLKEKYQVQFAGGQEPYKDALIRINHMGIIPVYKSAYALNALELALNDLDLREFDGVANATFLKQYYGI</sequence>
<gene>
    <name type="ordered locus">HP_0736</name>
</gene>